<gene>
    <name evidence="1" type="primary">nfi</name>
    <name type="ordered locus">Z5574</name>
    <name type="ordered locus">ECs4921</name>
</gene>
<comment type="function">
    <text evidence="1">DNA repair enzyme involved in the repair of deaminated bases. Selectively cleaves double-stranded DNA at the second phosphodiester bond 3' to a deoxyinosine leaving behind the intact lesion on the nicked DNA.</text>
</comment>
<comment type="catalytic activity">
    <reaction evidence="1">
        <text>Endonucleolytic cleavage at apurinic or apyrimidinic sites to products with a 5'-phosphate.</text>
        <dbReference type="EC" id="3.1.21.7"/>
    </reaction>
</comment>
<comment type="cofactor">
    <cofactor evidence="1">
        <name>Mg(2+)</name>
        <dbReference type="ChEBI" id="CHEBI:18420"/>
    </cofactor>
</comment>
<comment type="subcellular location">
    <subcellularLocation>
        <location evidence="1">Cytoplasm</location>
    </subcellularLocation>
</comment>
<comment type="similarity">
    <text evidence="1">Belongs to the endonuclease V family.</text>
</comment>
<dbReference type="EC" id="3.1.21.7" evidence="1"/>
<dbReference type="EMBL" id="AE005174">
    <property type="protein sequence ID" value="AAG59195.1"/>
    <property type="molecule type" value="Genomic_DNA"/>
</dbReference>
<dbReference type="EMBL" id="BA000007">
    <property type="protein sequence ID" value="BAB38344.1"/>
    <property type="molecule type" value="Genomic_DNA"/>
</dbReference>
<dbReference type="PIR" id="A98244">
    <property type="entry name" value="A98244"/>
</dbReference>
<dbReference type="PIR" id="G86091">
    <property type="entry name" value="G86091"/>
</dbReference>
<dbReference type="RefSeq" id="NP_312948.1">
    <property type="nucleotide sequence ID" value="NC_002695.1"/>
</dbReference>
<dbReference type="RefSeq" id="WP_000362388.1">
    <property type="nucleotide sequence ID" value="NZ_VOAI01000037.1"/>
</dbReference>
<dbReference type="SMR" id="P68741"/>
<dbReference type="STRING" id="155864.Z5574"/>
<dbReference type="GeneID" id="75169444"/>
<dbReference type="GeneID" id="914931"/>
<dbReference type="KEGG" id="ece:Z5574"/>
<dbReference type="KEGG" id="ecs:ECs_4921"/>
<dbReference type="PATRIC" id="fig|386585.9.peg.5146"/>
<dbReference type="eggNOG" id="COG1515">
    <property type="taxonomic scope" value="Bacteria"/>
</dbReference>
<dbReference type="HOGENOM" id="CLU_047631_1_0_6"/>
<dbReference type="OMA" id="NACAHTL"/>
<dbReference type="Proteomes" id="UP000000558">
    <property type="component" value="Chromosome"/>
</dbReference>
<dbReference type="Proteomes" id="UP000002519">
    <property type="component" value="Chromosome"/>
</dbReference>
<dbReference type="GO" id="GO:0005737">
    <property type="term" value="C:cytoplasm"/>
    <property type="evidence" value="ECO:0007669"/>
    <property type="project" value="UniProtKB-SubCell"/>
</dbReference>
<dbReference type="GO" id="GO:0043737">
    <property type="term" value="F:deoxyribonuclease V activity"/>
    <property type="evidence" value="ECO:0007669"/>
    <property type="project" value="UniProtKB-UniRule"/>
</dbReference>
<dbReference type="GO" id="GO:0000287">
    <property type="term" value="F:magnesium ion binding"/>
    <property type="evidence" value="ECO:0007669"/>
    <property type="project" value="UniProtKB-UniRule"/>
</dbReference>
<dbReference type="GO" id="GO:0016891">
    <property type="term" value="F:RNA endonuclease activity, producing 5'-phosphomonoesters"/>
    <property type="evidence" value="ECO:0007669"/>
    <property type="project" value="TreeGrafter"/>
</dbReference>
<dbReference type="GO" id="GO:0003727">
    <property type="term" value="F:single-stranded RNA binding"/>
    <property type="evidence" value="ECO:0007669"/>
    <property type="project" value="TreeGrafter"/>
</dbReference>
<dbReference type="GO" id="GO:0006281">
    <property type="term" value="P:DNA repair"/>
    <property type="evidence" value="ECO:0007669"/>
    <property type="project" value="UniProtKB-UniRule"/>
</dbReference>
<dbReference type="CDD" id="cd06559">
    <property type="entry name" value="Endonuclease_V"/>
    <property type="match status" value="1"/>
</dbReference>
<dbReference type="FunFam" id="3.30.2170.10:FF:000001">
    <property type="entry name" value="Endonuclease V"/>
    <property type="match status" value="1"/>
</dbReference>
<dbReference type="Gene3D" id="3.30.2170.10">
    <property type="entry name" value="archaeoglobus fulgidus dsm 4304 superfamily"/>
    <property type="match status" value="1"/>
</dbReference>
<dbReference type="HAMAP" id="MF_00801">
    <property type="entry name" value="Endonuclease_5"/>
    <property type="match status" value="1"/>
</dbReference>
<dbReference type="InterPro" id="IPR007581">
    <property type="entry name" value="Endonuclease-V"/>
</dbReference>
<dbReference type="NCBIfam" id="NF008629">
    <property type="entry name" value="PRK11617.1"/>
    <property type="match status" value="1"/>
</dbReference>
<dbReference type="PANTHER" id="PTHR28511">
    <property type="entry name" value="ENDONUCLEASE V"/>
    <property type="match status" value="1"/>
</dbReference>
<dbReference type="PANTHER" id="PTHR28511:SF1">
    <property type="entry name" value="ENDONUCLEASE V"/>
    <property type="match status" value="1"/>
</dbReference>
<dbReference type="Pfam" id="PF04493">
    <property type="entry name" value="Endonuclease_5"/>
    <property type="match status" value="1"/>
</dbReference>
<reference key="1">
    <citation type="journal article" date="2001" name="Nature">
        <title>Genome sequence of enterohaemorrhagic Escherichia coli O157:H7.</title>
        <authorList>
            <person name="Perna N.T."/>
            <person name="Plunkett G. III"/>
            <person name="Burland V."/>
            <person name="Mau B."/>
            <person name="Glasner J.D."/>
            <person name="Rose D.J."/>
            <person name="Mayhew G.F."/>
            <person name="Evans P.S."/>
            <person name="Gregor J."/>
            <person name="Kirkpatrick H.A."/>
            <person name="Posfai G."/>
            <person name="Hackett J."/>
            <person name="Klink S."/>
            <person name="Boutin A."/>
            <person name="Shao Y."/>
            <person name="Miller L."/>
            <person name="Grotbeck E.J."/>
            <person name="Davis N.W."/>
            <person name="Lim A."/>
            <person name="Dimalanta E.T."/>
            <person name="Potamousis K."/>
            <person name="Apodaca J."/>
            <person name="Anantharaman T.S."/>
            <person name="Lin J."/>
            <person name="Yen G."/>
            <person name="Schwartz D.C."/>
            <person name="Welch R.A."/>
            <person name="Blattner F.R."/>
        </authorList>
    </citation>
    <scope>NUCLEOTIDE SEQUENCE [LARGE SCALE GENOMIC DNA]</scope>
    <source>
        <strain>O157:H7 / EDL933 / ATCC 700927 / EHEC</strain>
    </source>
</reference>
<reference key="2">
    <citation type="journal article" date="2001" name="DNA Res.">
        <title>Complete genome sequence of enterohemorrhagic Escherichia coli O157:H7 and genomic comparison with a laboratory strain K-12.</title>
        <authorList>
            <person name="Hayashi T."/>
            <person name="Makino K."/>
            <person name="Ohnishi M."/>
            <person name="Kurokawa K."/>
            <person name="Ishii K."/>
            <person name="Yokoyama K."/>
            <person name="Han C.-G."/>
            <person name="Ohtsubo E."/>
            <person name="Nakayama K."/>
            <person name="Murata T."/>
            <person name="Tanaka M."/>
            <person name="Tobe T."/>
            <person name="Iida T."/>
            <person name="Takami H."/>
            <person name="Honda T."/>
            <person name="Sasakawa C."/>
            <person name="Ogasawara N."/>
            <person name="Yasunaga T."/>
            <person name="Kuhara S."/>
            <person name="Shiba T."/>
            <person name="Hattori M."/>
            <person name="Shinagawa H."/>
        </authorList>
    </citation>
    <scope>NUCLEOTIDE SEQUENCE [LARGE SCALE GENOMIC DNA]</scope>
    <source>
        <strain>O157:H7 / Sakai / RIMD 0509952 / EHEC</strain>
    </source>
</reference>
<organism>
    <name type="scientific">Escherichia coli O157:H7</name>
    <dbReference type="NCBI Taxonomy" id="83334"/>
    <lineage>
        <taxon>Bacteria</taxon>
        <taxon>Pseudomonadati</taxon>
        <taxon>Pseudomonadota</taxon>
        <taxon>Gammaproteobacteria</taxon>
        <taxon>Enterobacterales</taxon>
        <taxon>Enterobacteriaceae</taxon>
        <taxon>Escherichia</taxon>
    </lineage>
</organism>
<keyword id="KW-0963">Cytoplasm</keyword>
<keyword id="KW-0227">DNA damage</keyword>
<keyword id="KW-0234">DNA repair</keyword>
<keyword id="KW-0255">Endonuclease</keyword>
<keyword id="KW-0378">Hydrolase</keyword>
<keyword id="KW-0460">Magnesium</keyword>
<keyword id="KW-0479">Metal-binding</keyword>
<keyword id="KW-0540">Nuclease</keyword>
<keyword id="KW-1185">Reference proteome</keyword>
<name>NFI_ECO57</name>
<protein>
    <recommendedName>
        <fullName evidence="1">Endonuclease V</fullName>
        <ecNumber evidence="1">3.1.21.7</ecNumber>
    </recommendedName>
    <alternativeName>
        <fullName evidence="1">Deoxyinosine 3'endonuclease</fullName>
    </alternativeName>
    <alternativeName>
        <fullName evidence="1">Deoxyribonuclease V</fullName>
        <shortName evidence="1">DNase V</shortName>
    </alternativeName>
</protein>
<sequence length="223" mass="24673">MDLASLRAQQIELASSVIREDRLDKDPPDLIAGADVGFEQGGEVTRAAMVLLKYPSLELVEYKVARIATTMPYIPGFLSFREYPALLAAWEMLSQKPDLVFVDGHGISHPRRLGVASHFGLLVDVPTIGVAKKRLCGKFEPLSSEPGALAPLMDKGEQLAWVWRSKARCNPLFIATGHRVSVDSALAWVQRCMKGYRLPEPTRWADAVASERPAFVRYTANQP</sequence>
<feature type="chain" id="PRO_0000159662" description="Endonuclease V">
    <location>
        <begin position="1"/>
        <end position="223"/>
    </location>
</feature>
<feature type="binding site" evidence="1">
    <location>
        <position position="35"/>
    </location>
    <ligand>
        <name>Mg(2+)</name>
        <dbReference type="ChEBI" id="CHEBI:18420"/>
    </ligand>
</feature>
<feature type="binding site" evidence="1">
    <location>
        <position position="103"/>
    </location>
    <ligand>
        <name>Mg(2+)</name>
        <dbReference type="ChEBI" id="CHEBI:18420"/>
    </ligand>
</feature>
<feature type="site" description="Interaction with target DNA" evidence="1">
    <location>
        <position position="73"/>
    </location>
</feature>
<proteinExistence type="inferred from homology"/>
<evidence type="ECO:0000255" key="1">
    <source>
        <dbReference type="HAMAP-Rule" id="MF_00801"/>
    </source>
</evidence>
<accession>P68741</accession>
<accession>P32679</accession>